<evidence type="ECO:0000255" key="1">
    <source>
        <dbReference type="HAMAP-Rule" id="MF_01554"/>
    </source>
</evidence>
<comment type="function">
    <text evidence="1">Catalyzes the conversion of glucosamine-6-phosphate to glucosamine-1-phosphate.</text>
</comment>
<comment type="catalytic activity">
    <reaction evidence="1">
        <text>alpha-D-glucosamine 1-phosphate = D-glucosamine 6-phosphate</text>
        <dbReference type="Rhea" id="RHEA:23424"/>
        <dbReference type="ChEBI" id="CHEBI:58516"/>
        <dbReference type="ChEBI" id="CHEBI:58725"/>
        <dbReference type="EC" id="5.4.2.10"/>
    </reaction>
</comment>
<comment type="cofactor">
    <cofactor evidence="1">
        <name>Mg(2+)</name>
        <dbReference type="ChEBI" id="CHEBI:18420"/>
    </cofactor>
    <text evidence="1">Binds 1 Mg(2+) ion per subunit.</text>
</comment>
<comment type="PTM">
    <text evidence="1">Activated by phosphorylation.</text>
</comment>
<comment type="similarity">
    <text evidence="1">Belongs to the phosphohexose mutase family.</text>
</comment>
<dbReference type="EC" id="5.4.2.10" evidence="1"/>
<dbReference type="EMBL" id="BA000033">
    <property type="protein sequence ID" value="BAB95953.1"/>
    <property type="molecule type" value="Genomic_DNA"/>
</dbReference>
<dbReference type="RefSeq" id="WP_000521495.1">
    <property type="nucleotide sequence ID" value="NC_003923.1"/>
</dbReference>
<dbReference type="SMR" id="P65705"/>
<dbReference type="KEGG" id="sam:MW2088"/>
<dbReference type="HOGENOM" id="CLU_016950_7_0_9"/>
<dbReference type="GO" id="GO:0005829">
    <property type="term" value="C:cytosol"/>
    <property type="evidence" value="ECO:0007669"/>
    <property type="project" value="TreeGrafter"/>
</dbReference>
<dbReference type="GO" id="GO:0000287">
    <property type="term" value="F:magnesium ion binding"/>
    <property type="evidence" value="ECO:0007669"/>
    <property type="project" value="UniProtKB-UniRule"/>
</dbReference>
<dbReference type="GO" id="GO:0008966">
    <property type="term" value="F:phosphoglucosamine mutase activity"/>
    <property type="evidence" value="ECO:0007669"/>
    <property type="project" value="UniProtKB-UniRule"/>
</dbReference>
<dbReference type="GO" id="GO:0004615">
    <property type="term" value="F:phosphomannomutase activity"/>
    <property type="evidence" value="ECO:0007669"/>
    <property type="project" value="TreeGrafter"/>
</dbReference>
<dbReference type="GO" id="GO:0005975">
    <property type="term" value="P:carbohydrate metabolic process"/>
    <property type="evidence" value="ECO:0007669"/>
    <property type="project" value="InterPro"/>
</dbReference>
<dbReference type="GO" id="GO:0009252">
    <property type="term" value="P:peptidoglycan biosynthetic process"/>
    <property type="evidence" value="ECO:0007669"/>
    <property type="project" value="TreeGrafter"/>
</dbReference>
<dbReference type="GO" id="GO:0006048">
    <property type="term" value="P:UDP-N-acetylglucosamine biosynthetic process"/>
    <property type="evidence" value="ECO:0007669"/>
    <property type="project" value="TreeGrafter"/>
</dbReference>
<dbReference type="CDD" id="cd05802">
    <property type="entry name" value="GlmM"/>
    <property type="match status" value="1"/>
</dbReference>
<dbReference type="FunFam" id="3.30.310.50:FF:000001">
    <property type="entry name" value="Phosphoglucosamine mutase"/>
    <property type="match status" value="1"/>
</dbReference>
<dbReference type="FunFam" id="3.40.120.10:FF:000001">
    <property type="entry name" value="Phosphoglucosamine mutase"/>
    <property type="match status" value="1"/>
</dbReference>
<dbReference type="FunFam" id="3.40.120.10:FF:000002">
    <property type="entry name" value="Phosphoglucosamine mutase"/>
    <property type="match status" value="1"/>
</dbReference>
<dbReference type="Gene3D" id="3.40.120.10">
    <property type="entry name" value="Alpha-D-Glucose-1,6-Bisphosphate, subunit A, domain 3"/>
    <property type="match status" value="3"/>
</dbReference>
<dbReference type="Gene3D" id="3.30.310.50">
    <property type="entry name" value="Alpha-D-phosphohexomutase, C-terminal domain"/>
    <property type="match status" value="1"/>
</dbReference>
<dbReference type="HAMAP" id="MF_01554_B">
    <property type="entry name" value="GlmM_B"/>
    <property type="match status" value="1"/>
</dbReference>
<dbReference type="InterPro" id="IPR005844">
    <property type="entry name" value="A-D-PHexomutase_a/b/a-I"/>
</dbReference>
<dbReference type="InterPro" id="IPR016055">
    <property type="entry name" value="A-D-PHexomutase_a/b/a-I/II/III"/>
</dbReference>
<dbReference type="InterPro" id="IPR005845">
    <property type="entry name" value="A-D-PHexomutase_a/b/a-II"/>
</dbReference>
<dbReference type="InterPro" id="IPR005846">
    <property type="entry name" value="A-D-PHexomutase_a/b/a-III"/>
</dbReference>
<dbReference type="InterPro" id="IPR005843">
    <property type="entry name" value="A-D-PHexomutase_C"/>
</dbReference>
<dbReference type="InterPro" id="IPR036900">
    <property type="entry name" value="A-D-PHexomutase_C_sf"/>
</dbReference>
<dbReference type="InterPro" id="IPR016066">
    <property type="entry name" value="A-D-PHexomutase_CS"/>
</dbReference>
<dbReference type="InterPro" id="IPR005841">
    <property type="entry name" value="Alpha-D-phosphohexomutase_SF"/>
</dbReference>
<dbReference type="InterPro" id="IPR006352">
    <property type="entry name" value="GlmM_bact"/>
</dbReference>
<dbReference type="InterPro" id="IPR050060">
    <property type="entry name" value="Phosphoglucosamine_mutase"/>
</dbReference>
<dbReference type="NCBIfam" id="TIGR01455">
    <property type="entry name" value="glmM"/>
    <property type="match status" value="1"/>
</dbReference>
<dbReference type="NCBIfam" id="NF008139">
    <property type="entry name" value="PRK10887.1"/>
    <property type="match status" value="1"/>
</dbReference>
<dbReference type="PANTHER" id="PTHR42946:SF1">
    <property type="entry name" value="PHOSPHOGLUCOMUTASE (ALPHA-D-GLUCOSE-1,6-BISPHOSPHATE-DEPENDENT)"/>
    <property type="match status" value="1"/>
</dbReference>
<dbReference type="PANTHER" id="PTHR42946">
    <property type="entry name" value="PHOSPHOHEXOSE MUTASE"/>
    <property type="match status" value="1"/>
</dbReference>
<dbReference type="Pfam" id="PF02878">
    <property type="entry name" value="PGM_PMM_I"/>
    <property type="match status" value="1"/>
</dbReference>
<dbReference type="Pfam" id="PF02879">
    <property type="entry name" value="PGM_PMM_II"/>
    <property type="match status" value="1"/>
</dbReference>
<dbReference type="Pfam" id="PF02880">
    <property type="entry name" value="PGM_PMM_III"/>
    <property type="match status" value="1"/>
</dbReference>
<dbReference type="Pfam" id="PF00408">
    <property type="entry name" value="PGM_PMM_IV"/>
    <property type="match status" value="1"/>
</dbReference>
<dbReference type="PRINTS" id="PR00509">
    <property type="entry name" value="PGMPMM"/>
</dbReference>
<dbReference type="SUPFAM" id="SSF55957">
    <property type="entry name" value="Phosphoglucomutase, C-terminal domain"/>
    <property type="match status" value="1"/>
</dbReference>
<dbReference type="SUPFAM" id="SSF53738">
    <property type="entry name" value="Phosphoglucomutase, first 3 domains"/>
    <property type="match status" value="3"/>
</dbReference>
<dbReference type="PROSITE" id="PS00710">
    <property type="entry name" value="PGM_PMM"/>
    <property type="match status" value="1"/>
</dbReference>
<name>GLMM_STAAW</name>
<sequence length="451" mass="49294">MGKYFGTDGVRGVANQELTPELAFKLGRYGGYVLAHNKGEKHPRVLVGRDTRVSGEMLESALIAGLISIGAEVMRLGIISTPGVAYLTRDMGAELGVMISASHNPVADNGIKFFGSDGFKLSDEQENEIEALLDQENPELPRPVGNDIVHYSDYFEGAQKYLSYLKSTVDVNFEGLKIVLDGANGSTSSLAPFLFGDLEADTETIGCSPDGYNINEKCGSTHPEKLAEKVVETESDFGLAFDGDGDRIIAVDENGQIVDGDQIMFIIGQEMHKNQELNNDMIVSTVMSNLGFYKALEQEGIKSNKTKVGDRYVVEEMRRGNYNLGGEQSGHIVMMDYNTTGDGLLTGIQLASVIKMTGKSLSELAGQMKKYPQSLINVRVTDKYRVEENVDVKEVMTKVEVEMNGEGRILVRPSGTEPLVRVMVEAATDEDAERFAQQIADVVQDKMGLDK</sequence>
<keyword id="KW-0413">Isomerase</keyword>
<keyword id="KW-0460">Magnesium</keyword>
<keyword id="KW-0479">Metal-binding</keyword>
<keyword id="KW-0597">Phosphoprotein</keyword>
<accession>P65705</accession>
<accession>Q99QR5</accession>
<feature type="chain" id="PRO_0000147963" description="Phosphoglucosamine mutase">
    <location>
        <begin position="1"/>
        <end position="451"/>
    </location>
</feature>
<feature type="active site" description="Phosphoserine intermediate" evidence="1">
    <location>
        <position position="102"/>
    </location>
</feature>
<feature type="binding site" description="via phosphate group" evidence="1">
    <location>
        <position position="102"/>
    </location>
    <ligand>
        <name>Mg(2+)</name>
        <dbReference type="ChEBI" id="CHEBI:18420"/>
    </ligand>
</feature>
<feature type="binding site" evidence="1">
    <location>
        <position position="242"/>
    </location>
    <ligand>
        <name>Mg(2+)</name>
        <dbReference type="ChEBI" id="CHEBI:18420"/>
    </ligand>
</feature>
<feature type="binding site" evidence="1">
    <location>
        <position position="244"/>
    </location>
    <ligand>
        <name>Mg(2+)</name>
        <dbReference type="ChEBI" id="CHEBI:18420"/>
    </ligand>
</feature>
<feature type="binding site" evidence="1">
    <location>
        <position position="246"/>
    </location>
    <ligand>
        <name>Mg(2+)</name>
        <dbReference type="ChEBI" id="CHEBI:18420"/>
    </ligand>
</feature>
<feature type="modified residue" description="Phosphoserine" evidence="1">
    <location>
        <position position="102"/>
    </location>
</feature>
<protein>
    <recommendedName>
        <fullName evidence="1">Phosphoglucosamine mutase</fullName>
        <ecNumber evidence="1">5.4.2.10</ecNumber>
    </recommendedName>
</protein>
<organism>
    <name type="scientific">Staphylococcus aureus (strain MW2)</name>
    <dbReference type="NCBI Taxonomy" id="196620"/>
    <lineage>
        <taxon>Bacteria</taxon>
        <taxon>Bacillati</taxon>
        <taxon>Bacillota</taxon>
        <taxon>Bacilli</taxon>
        <taxon>Bacillales</taxon>
        <taxon>Staphylococcaceae</taxon>
        <taxon>Staphylococcus</taxon>
    </lineage>
</organism>
<gene>
    <name evidence="1" type="primary">glmM</name>
    <name type="synonym">femD</name>
    <name type="ordered locus">MW2088</name>
</gene>
<proteinExistence type="inferred from homology"/>
<reference key="1">
    <citation type="journal article" date="2002" name="Lancet">
        <title>Genome and virulence determinants of high virulence community-acquired MRSA.</title>
        <authorList>
            <person name="Baba T."/>
            <person name="Takeuchi F."/>
            <person name="Kuroda M."/>
            <person name="Yuzawa H."/>
            <person name="Aoki K."/>
            <person name="Oguchi A."/>
            <person name="Nagai Y."/>
            <person name="Iwama N."/>
            <person name="Asano K."/>
            <person name="Naimi T."/>
            <person name="Kuroda H."/>
            <person name="Cui L."/>
            <person name="Yamamoto K."/>
            <person name="Hiramatsu K."/>
        </authorList>
    </citation>
    <scope>NUCLEOTIDE SEQUENCE [LARGE SCALE GENOMIC DNA]</scope>
    <source>
        <strain>MW2</strain>
    </source>
</reference>